<name>5DNU_SALCH</name>
<dbReference type="EC" id="3.1.3.89" evidence="1"/>
<dbReference type="EMBL" id="AE017220">
    <property type="protein sequence ID" value="AAX66239.1"/>
    <property type="molecule type" value="Genomic_DNA"/>
</dbReference>
<dbReference type="RefSeq" id="WP_000813882.1">
    <property type="nucleotide sequence ID" value="NC_006905.1"/>
</dbReference>
<dbReference type="SMR" id="Q57M23"/>
<dbReference type="KEGG" id="sec:SCH_2333"/>
<dbReference type="HOGENOM" id="CLU_084784_0_0_6"/>
<dbReference type="Proteomes" id="UP000000538">
    <property type="component" value="Chromosome"/>
</dbReference>
<dbReference type="GO" id="GO:0005737">
    <property type="term" value="C:cytoplasm"/>
    <property type="evidence" value="ECO:0007669"/>
    <property type="project" value="UniProtKB-SubCell"/>
</dbReference>
<dbReference type="GO" id="GO:0002953">
    <property type="term" value="F:5'-deoxynucleotidase activity"/>
    <property type="evidence" value="ECO:0007669"/>
    <property type="project" value="UniProtKB-EC"/>
</dbReference>
<dbReference type="GO" id="GO:0046872">
    <property type="term" value="F:metal ion binding"/>
    <property type="evidence" value="ECO:0007669"/>
    <property type="project" value="UniProtKB-KW"/>
</dbReference>
<dbReference type="GO" id="GO:0000166">
    <property type="term" value="F:nucleotide binding"/>
    <property type="evidence" value="ECO:0007669"/>
    <property type="project" value="UniProtKB-KW"/>
</dbReference>
<dbReference type="FunFam" id="1.10.3210.10:FF:000002">
    <property type="entry name" value="Nucleotidase YfbR"/>
    <property type="match status" value="1"/>
</dbReference>
<dbReference type="Gene3D" id="1.10.3210.10">
    <property type="entry name" value="Hypothetical protein af1432"/>
    <property type="match status" value="1"/>
</dbReference>
<dbReference type="HAMAP" id="MF_01100">
    <property type="entry name" value="5DNU"/>
    <property type="match status" value="1"/>
</dbReference>
<dbReference type="InterPro" id="IPR003607">
    <property type="entry name" value="HD/PDEase_dom"/>
</dbReference>
<dbReference type="InterPro" id="IPR006674">
    <property type="entry name" value="HD_domain"/>
</dbReference>
<dbReference type="InterPro" id="IPR022971">
    <property type="entry name" value="YfbR"/>
</dbReference>
<dbReference type="InterPro" id="IPR039356">
    <property type="entry name" value="YfbR/HDDC2"/>
</dbReference>
<dbReference type="NCBIfam" id="NF003009">
    <property type="entry name" value="PRK03826.1"/>
    <property type="match status" value="1"/>
</dbReference>
<dbReference type="PANTHER" id="PTHR11845">
    <property type="entry name" value="5'-DEOXYNUCLEOTIDASE HDDC2"/>
    <property type="match status" value="1"/>
</dbReference>
<dbReference type="PANTHER" id="PTHR11845:SF13">
    <property type="entry name" value="5'-DEOXYNUCLEOTIDASE HDDC2"/>
    <property type="match status" value="1"/>
</dbReference>
<dbReference type="Pfam" id="PF12917">
    <property type="entry name" value="YfbR-like"/>
    <property type="match status" value="1"/>
</dbReference>
<dbReference type="SMART" id="SM00471">
    <property type="entry name" value="HDc"/>
    <property type="match status" value="1"/>
</dbReference>
<dbReference type="SUPFAM" id="SSF109604">
    <property type="entry name" value="HD-domain/PDEase-like"/>
    <property type="match status" value="1"/>
</dbReference>
<dbReference type="PROSITE" id="PS51831">
    <property type="entry name" value="HD"/>
    <property type="match status" value="1"/>
</dbReference>
<organism>
    <name type="scientific">Salmonella choleraesuis (strain SC-B67)</name>
    <dbReference type="NCBI Taxonomy" id="321314"/>
    <lineage>
        <taxon>Bacteria</taxon>
        <taxon>Pseudomonadati</taxon>
        <taxon>Pseudomonadota</taxon>
        <taxon>Gammaproteobacteria</taxon>
        <taxon>Enterobacterales</taxon>
        <taxon>Enterobacteriaceae</taxon>
        <taxon>Salmonella</taxon>
    </lineage>
</organism>
<evidence type="ECO:0000255" key="1">
    <source>
        <dbReference type="HAMAP-Rule" id="MF_01100"/>
    </source>
</evidence>
<evidence type="ECO:0000255" key="2">
    <source>
        <dbReference type="PROSITE-ProRule" id="PRU01175"/>
    </source>
</evidence>
<protein>
    <recommendedName>
        <fullName evidence="1">5'-deoxynucleotidase YfbR</fullName>
        <ecNumber evidence="1">3.1.3.89</ecNumber>
    </recommendedName>
    <alternativeName>
        <fullName evidence="1">5'-deoxyribonucleotidase</fullName>
    </alternativeName>
    <alternativeName>
        <fullName evidence="1">Nucleoside 5'-monophosphate phosphohydrolase</fullName>
    </alternativeName>
</protein>
<keyword id="KW-0963">Cytoplasm</keyword>
<keyword id="KW-0378">Hydrolase</keyword>
<keyword id="KW-0479">Metal-binding</keyword>
<keyword id="KW-0547">Nucleotide-binding</keyword>
<gene>
    <name evidence="1" type="primary">yfbR</name>
    <name type="ordered locus">SCH_2333</name>
</gene>
<proteinExistence type="inferred from homology"/>
<reference key="1">
    <citation type="journal article" date="2005" name="Nucleic Acids Res.">
        <title>The genome sequence of Salmonella enterica serovar Choleraesuis, a highly invasive and resistant zoonotic pathogen.</title>
        <authorList>
            <person name="Chiu C.-H."/>
            <person name="Tang P."/>
            <person name="Chu C."/>
            <person name="Hu S."/>
            <person name="Bao Q."/>
            <person name="Yu J."/>
            <person name="Chou Y.-Y."/>
            <person name="Wang H.-S."/>
            <person name="Lee Y.-S."/>
        </authorList>
    </citation>
    <scope>NUCLEOTIDE SEQUENCE [LARGE SCALE GENOMIC DNA]</scope>
    <source>
        <strain>SC-B67</strain>
    </source>
</reference>
<accession>Q57M23</accession>
<feature type="chain" id="PRO_1000064956" description="5'-deoxynucleotidase YfbR">
    <location>
        <begin position="1"/>
        <end position="199"/>
    </location>
</feature>
<feature type="domain" description="HD" evidence="2">
    <location>
        <begin position="30"/>
        <end position="142"/>
    </location>
</feature>
<feature type="binding site" evidence="1">
    <location>
        <begin position="18"/>
        <end position="19"/>
    </location>
    <ligand>
        <name>substrate</name>
    </ligand>
</feature>
<feature type="binding site" evidence="1">
    <location>
        <position position="33"/>
    </location>
    <ligand>
        <name>a divalent metal cation</name>
        <dbReference type="ChEBI" id="CHEBI:60240"/>
    </ligand>
</feature>
<feature type="binding site" evidence="1">
    <location>
        <position position="33"/>
    </location>
    <ligand>
        <name>substrate</name>
    </ligand>
</feature>
<feature type="binding site" evidence="1">
    <location>
        <position position="68"/>
    </location>
    <ligand>
        <name>a divalent metal cation</name>
        <dbReference type="ChEBI" id="CHEBI:60240"/>
    </ligand>
</feature>
<feature type="binding site" evidence="1">
    <location>
        <position position="69"/>
    </location>
    <ligand>
        <name>a divalent metal cation</name>
        <dbReference type="ChEBI" id="CHEBI:60240"/>
    </ligand>
</feature>
<feature type="binding site" evidence="1">
    <location>
        <position position="69"/>
    </location>
    <ligand>
        <name>substrate</name>
    </ligand>
</feature>
<feature type="binding site" evidence="1">
    <location>
        <begin position="77"/>
        <end position="80"/>
    </location>
    <ligand>
        <name>substrate</name>
    </ligand>
</feature>
<feature type="binding site" evidence="1">
    <location>
        <position position="137"/>
    </location>
    <ligand>
        <name>a divalent metal cation</name>
        <dbReference type="ChEBI" id="CHEBI:60240"/>
    </ligand>
</feature>
<feature type="binding site" evidence="1">
    <location>
        <position position="137"/>
    </location>
    <ligand>
        <name>substrate</name>
    </ligand>
</feature>
<feature type="site" description="Appears to be important in orienting the phosphate for catalysis" evidence="1">
    <location>
        <position position="18"/>
    </location>
</feature>
<comment type="function">
    <text evidence="1">Catalyzes the strictly specific dephosphorylation of 2'-deoxyribonucleoside 5'-monophosphates.</text>
</comment>
<comment type="catalytic activity">
    <reaction evidence="1">
        <text>a 2'-deoxyribonucleoside 5'-phosphate + H2O = a 2'-deoxyribonucleoside + phosphate</text>
        <dbReference type="Rhea" id="RHEA:36167"/>
        <dbReference type="ChEBI" id="CHEBI:15377"/>
        <dbReference type="ChEBI" id="CHEBI:18274"/>
        <dbReference type="ChEBI" id="CHEBI:43474"/>
        <dbReference type="ChEBI" id="CHEBI:65317"/>
        <dbReference type="EC" id="3.1.3.89"/>
    </reaction>
</comment>
<comment type="cofactor">
    <cofactor evidence="1">
        <name>a divalent metal cation</name>
        <dbReference type="ChEBI" id="CHEBI:60240"/>
    </cofactor>
</comment>
<comment type="subunit">
    <text evidence="1">Homodimer.</text>
</comment>
<comment type="subcellular location">
    <subcellularLocation>
        <location evidence="1">Cytoplasm</location>
    </subcellularLocation>
</comment>
<comment type="similarity">
    <text evidence="1">Belongs to the 5DNU family.</text>
</comment>
<sequence length="199" mass="22697">MKQSHFFAHLSRMKLINRWPLMRNVRTENVSEHSLQVAMVAHALAAIKNRKFGGQLNAERIALLAMYHDASEVLTGDLPTPVKYFNSQIAQEYKAIEKIAQQKLVDMAPDELRDIFAPLIDENAWSEEEQAIVKQADALCAYLKCLEELSAGNNEFGLAKTRLEKTLELRRSQEMDYFMAVFVPSFHLSLDEISQDSPL</sequence>